<proteinExistence type="evidence at protein level"/>
<gene>
    <name evidence="12 15" type="primary">FEM1B</name>
    <name evidence="11" type="synonym">F1AA</name>
    <name evidence="13" type="synonym">KIAA0396</name>
</gene>
<protein>
    <recommendedName>
        <fullName evidence="14">Protein fem-1 homolog B</fullName>
        <shortName evidence="12">FEM1b</shortName>
    </recommendedName>
    <alternativeName>
        <fullName>FEM1-beta</fullName>
    </alternativeName>
    <alternativeName>
        <fullName evidence="11">Fem-1-like death receptor-binding protein alpha</fullName>
    </alternativeName>
    <alternativeName>
        <fullName evidence="11">Fem-1-like in apoptotic pathway protein alpha</fullName>
        <shortName evidence="11">F1A-alpha</shortName>
    </alternativeName>
</protein>
<reference key="1">
    <citation type="journal article" date="1999" name="J. Biol. Chem.">
        <title>F1Aalpha, a death receptor-binding protein homologous to the Caenorhabditis elegans sex-determining protein, FEM-1, is a caspase substrate that mediates apoptosis.</title>
        <authorList>
            <person name="Chan S.-L."/>
            <person name="Tan K.-O."/>
            <person name="Zhang L."/>
            <person name="Yee K.S.Y."/>
            <person name="Ronca F."/>
            <person name="Chan M.-Y."/>
            <person name="Yu V.C."/>
        </authorList>
    </citation>
    <scope>NUCLEOTIDE SEQUENCE [MRNA]</scope>
    <scope>FUNCTION</scope>
    <scope>CLEAVAGE</scope>
    <scope>TISSUE SPECIFICITY</scope>
    <scope>INTERACTION WITH FAS AND TNFRSF1A</scope>
    <scope>MUTAGENESIS OF ASP-342 AND ASP-356</scope>
</reference>
<reference key="2">
    <citation type="journal article" date="2000" name="Biochem. Biophys. Res. Commun.">
        <title>Sequence, organization, and expression of the human FEM1B gene.</title>
        <authorList>
            <person name="Ventura-Holman T."/>
            <person name="Maher J.F."/>
        </authorList>
    </citation>
    <scope>NUCLEOTIDE SEQUENCE [MRNA]</scope>
</reference>
<reference key="3">
    <citation type="journal article" date="1997" name="DNA Res.">
        <title>Prediction of the coding sequences of unidentified human genes. VIII. 78 new cDNA clones from brain which code for large proteins in vitro.</title>
        <authorList>
            <person name="Ishikawa K."/>
            <person name="Nagase T."/>
            <person name="Nakajima D."/>
            <person name="Seki N."/>
            <person name="Ohira M."/>
            <person name="Miyajima N."/>
            <person name="Tanaka A."/>
            <person name="Kotani H."/>
            <person name="Nomura N."/>
            <person name="Ohara O."/>
        </authorList>
    </citation>
    <scope>NUCLEOTIDE SEQUENCE [LARGE SCALE MRNA]</scope>
    <source>
        <tissue>Brain</tissue>
    </source>
</reference>
<reference key="4">
    <citation type="journal article" date="2002" name="DNA Res.">
        <title>Construction of expression-ready cDNA clones for KIAA genes: manual curation of 330 KIAA cDNA clones.</title>
        <authorList>
            <person name="Nakajima D."/>
            <person name="Okazaki N."/>
            <person name="Yamakawa H."/>
            <person name="Kikuno R."/>
            <person name="Ohara O."/>
            <person name="Nagase T."/>
        </authorList>
    </citation>
    <scope>SEQUENCE REVISION</scope>
</reference>
<reference key="5">
    <citation type="journal article" date="2004" name="Nat. Genet.">
        <title>Complete sequencing and characterization of 21,243 full-length human cDNAs.</title>
        <authorList>
            <person name="Ota T."/>
            <person name="Suzuki Y."/>
            <person name="Nishikawa T."/>
            <person name="Otsuki T."/>
            <person name="Sugiyama T."/>
            <person name="Irie R."/>
            <person name="Wakamatsu A."/>
            <person name="Hayashi K."/>
            <person name="Sato H."/>
            <person name="Nagai K."/>
            <person name="Kimura K."/>
            <person name="Makita H."/>
            <person name="Sekine M."/>
            <person name="Obayashi M."/>
            <person name="Nishi T."/>
            <person name="Shibahara T."/>
            <person name="Tanaka T."/>
            <person name="Ishii S."/>
            <person name="Yamamoto J."/>
            <person name="Saito K."/>
            <person name="Kawai Y."/>
            <person name="Isono Y."/>
            <person name="Nakamura Y."/>
            <person name="Nagahari K."/>
            <person name="Murakami K."/>
            <person name="Yasuda T."/>
            <person name="Iwayanagi T."/>
            <person name="Wagatsuma M."/>
            <person name="Shiratori A."/>
            <person name="Sudo H."/>
            <person name="Hosoiri T."/>
            <person name="Kaku Y."/>
            <person name="Kodaira H."/>
            <person name="Kondo H."/>
            <person name="Sugawara M."/>
            <person name="Takahashi M."/>
            <person name="Kanda K."/>
            <person name="Yokoi T."/>
            <person name="Furuya T."/>
            <person name="Kikkawa E."/>
            <person name="Omura Y."/>
            <person name="Abe K."/>
            <person name="Kamihara K."/>
            <person name="Katsuta N."/>
            <person name="Sato K."/>
            <person name="Tanikawa M."/>
            <person name="Yamazaki M."/>
            <person name="Ninomiya K."/>
            <person name="Ishibashi T."/>
            <person name="Yamashita H."/>
            <person name="Murakawa K."/>
            <person name="Fujimori K."/>
            <person name="Tanai H."/>
            <person name="Kimata M."/>
            <person name="Watanabe M."/>
            <person name="Hiraoka S."/>
            <person name="Chiba Y."/>
            <person name="Ishida S."/>
            <person name="Ono Y."/>
            <person name="Takiguchi S."/>
            <person name="Watanabe S."/>
            <person name="Yosida M."/>
            <person name="Hotuta T."/>
            <person name="Kusano J."/>
            <person name="Kanehori K."/>
            <person name="Takahashi-Fujii A."/>
            <person name="Hara H."/>
            <person name="Tanase T.-O."/>
            <person name="Nomura Y."/>
            <person name="Togiya S."/>
            <person name="Komai F."/>
            <person name="Hara R."/>
            <person name="Takeuchi K."/>
            <person name="Arita M."/>
            <person name="Imose N."/>
            <person name="Musashino K."/>
            <person name="Yuuki H."/>
            <person name="Oshima A."/>
            <person name="Sasaki N."/>
            <person name="Aotsuka S."/>
            <person name="Yoshikawa Y."/>
            <person name="Matsunawa H."/>
            <person name="Ichihara T."/>
            <person name="Shiohata N."/>
            <person name="Sano S."/>
            <person name="Moriya S."/>
            <person name="Momiyama H."/>
            <person name="Satoh N."/>
            <person name="Takami S."/>
            <person name="Terashima Y."/>
            <person name="Suzuki O."/>
            <person name="Nakagawa S."/>
            <person name="Senoh A."/>
            <person name="Mizoguchi H."/>
            <person name="Goto Y."/>
            <person name="Shimizu F."/>
            <person name="Wakebe H."/>
            <person name="Hishigaki H."/>
            <person name="Watanabe T."/>
            <person name="Sugiyama A."/>
            <person name="Takemoto M."/>
            <person name="Kawakami B."/>
            <person name="Yamazaki M."/>
            <person name="Watanabe K."/>
            <person name="Kumagai A."/>
            <person name="Itakura S."/>
            <person name="Fukuzumi Y."/>
            <person name="Fujimori Y."/>
            <person name="Komiyama M."/>
            <person name="Tashiro H."/>
            <person name="Tanigami A."/>
            <person name="Fujiwara T."/>
            <person name="Ono T."/>
            <person name="Yamada K."/>
            <person name="Fujii Y."/>
            <person name="Ozaki K."/>
            <person name="Hirao M."/>
            <person name="Ohmori Y."/>
            <person name="Kawabata A."/>
            <person name="Hikiji T."/>
            <person name="Kobatake N."/>
            <person name="Inagaki H."/>
            <person name="Ikema Y."/>
            <person name="Okamoto S."/>
            <person name="Okitani R."/>
            <person name="Kawakami T."/>
            <person name="Noguchi S."/>
            <person name="Itoh T."/>
            <person name="Shigeta K."/>
            <person name="Senba T."/>
            <person name="Matsumura K."/>
            <person name="Nakajima Y."/>
            <person name="Mizuno T."/>
            <person name="Morinaga M."/>
            <person name="Sasaki M."/>
            <person name="Togashi T."/>
            <person name="Oyama M."/>
            <person name="Hata H."/>
            <person name="Watanabe M."/>
            <person name="Komatsu T."/>
            <person name="Mizushima-Sugano J."/>
            <person name="Satoh T."/>
            <person name="Shirai Y."/>
            <person name="Takahashi Y."/>
            <person name="Nakagawa K."/>
            <person name="Okumura K."/>
            <person name="Nagase T."/>
            <person name="Nomura N."/>
            <person name="Kikuchi H."/>
            <person name="Masuho Y."/>
            <person name="Yamashita R."/>
            <person name="Nakai K."/>
            <person name="Yada T."/>
            <person name="Nakamura Y."/>
            <person name="Ohara O."/>
            <person name="Isogai T."/>
            <person name="Sugano S."/>
        </authorList>
    </citation>
    <scope>NUCLEOTIDE SEQUENCE [LARGE SCALE MRNA]</scope>
    <source>
        <tissue>Thalamus</tissue>
    </source>
</reference>
<reference key="6">
    <citation type="journal article" date="2006" name="Nature">
        <title>Analysis of the DNA sequence and duplication history of human chromosome 15.</title>
        <authorList>
            <person name="Zody M.C."/>
            <person name="Garber M."/>
            <person name="Sharpe T."/>
            <person name="Young S.K."/>
            <person name="Rowen L."/>
            <person name="O'Neill K."/>
            <person name="Whittaker C.A."/>
            <person name="Kamal M."/>
            <person name="Chang J.L."/>
            <person name="Cuomo C.A."/>
            <person name="Dewar K."/>
            <person name="FitzGerald M.G."/>
            <person name="Kodira C.D."/>
            <person name="Madan A."/>
            <person name="Qin S."/>
            <person name="Yang X."/>
            <person name="Abbasi N."/>
            <person name="Abouelleil A."/>
            <person name="Arachchi H.M."/>
            <person name="Baradarani L."/>
            <person name="Birditt B."/>
            <person name="Bloom S."/>
            <person name="Bloom T."/>
            <person name="Borowsky M.L."/>
            <person name="Burke J."/>
            <person name="Butler J."/>
            <person name="Cook A."/>
            <person name="DeArellano K."/>
            <person name="DeCaprio D."/>
            <person name="Dorris L. III"/>
            <person name="Dors M."/>
            <person name="Eichler E.E."/>
            <person name="Engels R."/>
            <person name="Fahey J."/>
            <person name="Fleetwood P."/>
            <person name="Friedman C."/>
            <person name="Gearin G."/>
            <person name="Hall J.L."/>
            <person name="Hensley G."/>
            <person name="Johnson E."/>
            <person name="Jones C."/>
            <person name="Kamat A."/>
            <person name="Kaur A."/>
            <person name="Locke D.P."/>
            <person name="Madan A."/>
            <person name="Munson G."/>
            <person name="Jaffe D.B."/>
            <person name="Lui A."/>
            <person name="Macdonald P."/>
            <person name="Mauceli E."/>
            <person name="Naylor J.W."/>
            <person name="Nesbitt R."/>
            <person name="Nicol R."/>
            <person name="O'Leary S.B."/>
            <person name="Ratcliffe A."/>
            <person name="Rounsley S."/>
            <person name="She X."/>
            <person name="Sneddon K.M.B."/>
            <person name="Stewart S."/>
            <person name="Sougnez C."/>
            <person name="Stone S.M."/>
            <person name="Topham K."/>
            <person name="Vincent D."/>
            <person name="Wang S."/>
            <person name="Zimmer A.R."/>
            <person name="Birren B.W."/>
            <person name="Hood L."/>
            <person name="Lander E.S."/>
            <person name="Nusbaum C."/>
        </authorList>
    </citation>
    <scope>NUCLEOTIDE SEQUENCE [LARGE SCALE GENOMIC DNA]</scope>
</reference>
<reference key="7">
    <citation type="submission" date="2005-07" db="EMBL/GenBank/DDBJ databases">
        <authorList>
            <person name="Mural R.J."/>
            <person name="Istrail S."/>
            <person name="Sutton G.G."/>
            <person name="Florea L."/>
            <person name="Halpern A.L."/>
            <person name="Mobarry C.M."/>
            <person name="Lippert R."/>
            <person name="Walenz B."/>
            <person name="Shatkay H."/>
            <person name="Dew I."/>
            <person name="Miller J.R."/>
            <person name="Flanigan M.J."/>
            <person name="Edwards N.J."/>
            <person name="Bolanos R."/>
            <person name="Fasulo D."/>
            <person name="Halldorsson B.V."/>
            <person name="Hannenhalli S."/>
            <person name="Turner R."/>
            <person name="Yooseph S."/>
            <person name="Lu F."/>
            <person name="Nusskern D.R."/>
            <person name="Shue B.C."/>
            <person name="Zheng X.H."/>
            <person name="Zhong F."/>
            <person name="Delcher A.L."/>
            <person name="Huson D.H."/>
            <person name="Kravitz S.A."/>
            <person name="Mouchard L."/>
            <person name="Reinert K."/>
            <person name="Remington K.A."/>
            <person name="Clark A.G."/>
            <person name="Waterman M.S."/>
            <person name="Eichler E.E."/>
            <person name="Adams M.D."/>
            <person name="Hunkapiller M.W."/>
            <person name="Myers E.W."/>
            <person name="Venter J.C."/>
        </authorList>
    </citation>
    <scope>NUCLEOTIDE SEQUENCE [LARGE SCALE GENOMIC DNA]</scope>
</reference>
<reference key="8">
    <citation type="journal article" date="2004" name="Genome Res.">
        <title>The status, quality, and expansion of the NIH full-length cDNA project: the Mammalian Gene Collection (MGC).</title>
        <authorList>
            <consortium name="The MGC Project Team"/>
        </authorList>
    </citation>
    <scope>NUCLEOTIDE SEQUENCE [LARGE SCALE MRNA]</scope>
    <source>
        <tissue>Placenta</tissue>
    </source>
</reference>
<reference key="9">
    <citation type="journal article" date="2001" name="J. Biol. Chem.">
        <title>The Caenorhabditis elegans sex-determining protein fem-2 and its human homologue, hFEM-2, are Ca2+/calmodulin-dependent protein kinase phosphatases that promote apoptosis.</title>
        <authorList>
            <person name="Tan K.M.L."/>
            <person name="Chan S.-L."/>
            <person name="Tan K.O."/>
            <person name="Yu V.C."/>
        </authorList>
    </citation>
    <scope>INTERACTION WITH PPM1F</scope>
</reference>
<reference key="10">
    <citation type="journal article" date="2004" name="Genes Dev.">
        <title>VHL-box and SOCS-box domains determine binding specificity for Cul2-Rbx1 and Cul5-Rbx2 modules of ubiquitin ligases.</title>
        <authorList>
            <person name="Kamura T."/>
            <person name="Maenaka K."/>
            <person name="Kotoshiba S."/>
            <person name="Matsumoto M."/>
            <person name="Kohda D."/>
            <person name="Conaway R.C."/>
            <person name="Conaway J.W."/>
            <person name="Nakayama K.I."/>
        </authorList>
    </citation>
    <scope>IDENTIFICATION IN E3 UBIQUITIN-PROTEIN LIGASE COMPLEX WITH CUL2</scope>
</reference>
<reference key="11">
    <citation type="journal article" date="2009" name="Oncogene">
        <title>Human FEM1B is required for Rad9 recruitment and CHK1 activation in response to replication stress.</title>
        <authorList>
            <person name="Sun T.P."/>
            <person name="Shieh S.Y."/>
        </authorList>
    </citation>
    <scope>FUNCTION</scope>
    <scope>SUBCELLULAR LOCATION</scope>
    <scope>INTERACTION WITH CHEK1</scope>
</reference>
<reference key="12">
    <citation type="journal article" date="2013" name="Biochem. Biophys. Res. Commun.">
        <title>Fem1b promotes ubiquitylation and suppresses transcriptional activity of Gli1.</title>
        <authorList>
            <person name="Gilder A.S."/>
            <person name="Chen Y.B."/>
            <person name="Jackson R.J. III"/>
            <person name="Jiang J."/>
            <person name="Maher J.F."/>
        </authorList>
    </citation>
    <scope>FUNCTION</scope>
    <scope>PATHWAY</scope>
    <scope>SUBCELLULAR LOCATION</scope>
    <scope>MUTAGENESIS OF LEU-597</scope>
</reference>
<reference key="13">
    <citation type="journal article" date="2017" name="Cell Cycle">
        <title>FEM1 proteins are ancient regulators of SLBP degradation.</title>
        <authorList>
            <person name="Dankert J.F."/>
            <person name="Pagan J.K."/>
            <person name="Starostina N.G."/>
            <person name="Kipreos E.T."/>
            <person name="Pagano M."/>
        </authorList>
    </citation>
    <scope>FUNCTION</scope>
    <scope>PATHWAY</scope>
</reference>
<reference key="14">
    <citation type="journal article" date="2018" name="Cell">
        <title>The eukaryotic proteome is shaped by E3 ubiquitin ligases targeting C-terminal degrons.</title>
        <authorList>
            <person name="Koren I."/>
            <person name="Timms R.T."/>
            <person name="Kula T."/>
            <person name="Xu Q."/>
            <person name="Li M.Z."/>
            <person name="Elledge S.J."/>
        </authorList>
    </citation>
    <scope>FUNCTION</scope>
    <scope>PATHWAY</scope>
    <scope>IDENTIFICATION IN A CRL2 E3 UBIQUITIN-PROTEIN LIGASE COMPLEX</scope>
</reference>
<reference key="15">
    <citation type="journal article" date="2021" name="Nat. Chem. Biol.">
        <title>Molecular basis for ubiquitin ligase CRL2FEM1C-mediated recognition of C-degron.</title>
        <authorList>
            <person name="Yan X."/>
            <person name="Wang X."/>
            <person name="Li Y."/>
            <person name="Zhou M."/>
            <person name="Li Y."/>
            <person name="Song L."/>
            <person name="Mi W."/>
            <person name="Min J."/>
            <person name="Dong C."/>
        </authorList>
    </citation>
    <scope>FUNCTION</scope>
    <scope>PATHWAY</scope>
</reference>
<reference evidence="16 17" key="16">
    <citation type="journal article" date="2021" name="Nat. Chem. Biol.">
        <title>Molecular basis for arginine C-terminal degron recognition by Cul2FEM1 E3 ligase.</title>
        <authorList>
            <person name="Chen X."/>
            <person name="Liao S."/>
            <person name="Makaros Y."/>
            <person name="Guo Q."/>
            <person name="Zhu Z."/>
            <person name="Krizelman R."/>
            <person name="Dahan K."/>
            <person name="Tu X."/>
            <person name="Yao X."/>
            <person name="Koren I."/>
            <person name="Xu C."/>
        </authorList>
    </citation>
    <scope>X-RAY CRYSTALLOGRAPHY (3.25 ANGSTROMS) OF 1-356 IN COMPLEX WITH C-DEGRONS</scope>
    <scope>FUNCTION</scope>
    <scope>PATHWAY</scope>
    <scope>MUTAGENESIS OF ASP-82; PHE-130; ASP-131; TYR-163 AND PHE-193</scope>
</reference>
<feature type="chain" id="PRO_0000324530" description="Protein fem-1 homolog B">
    <location>
        <begin position="1"/>
        <end position="627"/>
    </location>
</feature>
<feature type="repeat" description="ANK 1">
    <location>
        <begin position="45"/>
        <end position="74"/>
    </location>
</feature>
<feature type="repeat" description="ANK 2">
    <location>
        <begin position="87"/>
        <end position="116"/>
    </location>
</feature>
<feature type="repeat" description="ANK 3">
    <location>
        <begin position="120"/>
        <end position="149"/>
    </location>
</feature>
<feature type="repeat" description="ANK 4">
    <location>
        <begin position="153"/>
        <end position="182"/>
    </location>
</feature>
<feature type="repeat" description="ANK 5">
    <location>
        <begin position="186"/>
        <end position="215"/>
    </location>
</feature>
<feature type="repeat" description="ANK 6">
    <location>
        <begin position="218"/>
        <end position="248"/>
    </location>
</feature>
<feature type="repeat" description="TPR">
    <location>
        <begin position="344"/>
        <end position="377"/>
    </location>
</feature>
<feature type="repeat" description="ANK 7">
    <location>
        <begin position="483"/>
        <end position="527"/>
    </location>
</feature>
<feature type="repeat" description="ANK 8">
    <location>
        <begin position="531"/>
        <end position="568"/>
    </location>
</feature>
<feature type="binding site" evidence="1">
    <location>
        <position position="185"/>
    </location>
    <ligand>
        <name>Zn(2+)</name>
        <dbReference type="ChEBI" id="CHEBI:29105"/>
        <label>1</label>
        <note>ligand shared with FNIP1</note>
    </ligand>
</feature>
<feature type="binding site" evidence="1">
    <location>
        <position position="186"/>
    </location>
    <ligand>
        <name>Zn(2+)</name>
        <dbReference type="ChEBI" id="CHEBI:29105"/>
        <label>2</label>
        <note>ligand shared with FNIP1</note>
    </ligand>
</feature>
<feature type="binding site" evidence="1">
    <location>
        <position position="186"/>
    </location>
    <ligand>
        <name>Zn(2+)</name>
        <dbReference type="ChEBI" id="CHEBI:29105"/>
        <note>ligand shared with BEX proteins</note>
    </ligand>
</feature>
<feature type="binding site" evidence="1">
    <location>
        <position position="218"/>
    </location>
    <ligand>
        <name>Zn(2+)</name>
        <dbReference type="ChEBI" id="CHEBI:29105"/>
        <label>2</label>
        <note>ligand shared with FNIP1</note>
    </ligand>
</feature>
<feature type="site" description="Cleavage; by a caspase-3-like protease" evidence="2">
    <location>
        <begin position="342"/>
        <end position="343"/>
    </location>
</feature>
<feature type="mutagenesis site" description="Abolished binding to -Gly-Leu-Asp-Arg C-degron at the C-terminus; when associated with A-131." evidence="9">
    <original>D</original>
    <variation>A</variation>
    <location>
        <position position="82"/>
    </location>
</feature>
<feature type="mutagenesis site" description="Abolished binding to -Gly-Leu-Asp-Arg C-degron at the C-terminus." evidence="9">
    <original>F</original>
    <variation>A</variation>
    <location>
        <position position="130"/>
    </location>
</feature>
<feature type="mutagenesis site" description="Abolished binding to -Gly-Leu-Asp-Arg C-degron at the C-terminus; when associated with A-82." evidence="9">
    <original>D</original>
    <variation>A</variation>
    <location>
        <position position="131"/>
    </location>
</feature>
<feature type="mutagenesis site" description="Strongly reduced binding to -Gly-Leu-Asp-Arg C-degron at the C-terminus; when associated with A-193." evidence="9">
    <original>Y</original>
    <variation>A</variation>
    <location>
        <position position="163"/>
    </location>
</feature>
<feature type="mutagenesis site" description="Strongly reduced binding to -Gly-Leu-Asp-Arg C-degron at the C-terminus; when associated with A-163." evidence="9">
    <original>F</original>
    <variation>A</variation>
    <location>
        <position position="193"/>
    </location>
</feature>
<feature type="mutagenesis site" description="Prevents cleavage by a caspase-3-like protease." evidence="2">
    <original>D</original>
    <variation>A</variation>
    <location>
        <position position="342"/>
    </location>
</feature>
<feature type="mutagenesis site" description="Does not affect cleavage by a caspase-3-like protease." evidence="2">
    <original>D</original>
    <variation>A</variation>
    <location>
        <position position="356"/>
    </location>
</feature>
<feature type="mutagenesis site" description="Abolished ability to promote ubiquitination of target proteins such as GLI1." evidence="6">
    <original>L</original>
    <variation>A</variation>
    <location>
        <position position="597"/>
    </location>
</feature>
<feature type="helix" evidence="19">
    <location>
        <begin position="4"/>
        <end position="14"/>
    </location>
</feature>
<feature type="helix" evidence="19">
    <location>
        <begin position="17"/>
        <end position="24"/>
    </location>
</feature>
<feature type="helix" evidence="19">
    <location>
        <begin position="29"/>
        <end position="36"/>
    </location>
</feature>
<feature type="strand" evidence="18">
    <location>
        <begin position="40"/>
        <end position="44"/>
    </location>
</feature>
<feature type="strand" evidence="21">
    <location>
        <begin position="45"/>
        <end position="47"/>
    </location>
</feature>
<feature type="helix" evidence="19">
    <location>
        <begin position="49"/>
        <end position="55"/>
    </location>
</feature>
<feature type="helix" evidence="19">
    <location>
        <begin position="59"/>
        <end position="69"/>
    </location>
</feature>
<feature type="strand" evidence="19">
    <location>
        <begin position="76"/>
        <end position="81"/>
    </location>
</feature>
<feature type="strand" evidence="19">
    <location>
        <begin position="84"/>
        <end position="90"/>
    </location>
</feature>
<feature type="helix" evidence="19">
    <location>
        <begin position="91"/>
        <end position="97"/>
    </location>
</feature>
<feature type="helix" evidence="19">
    <location>
        <begin position="101"/>
        <end position="109"/>
    </location>
</feature>
<feature type="helix" evidence="19">
    <location>
        <begin position="124"/>
        <end position="131"/>
    </location>
</feature>
<feature type="helix" evidence="19">
    <location>
        <begin position="134"/>
        <end position="142"/>
    </location>
</feature>
<feature type="helix" evidence="19">
    <location>
        <begin position="157"/>
        <end position="163"/>
    </location>
</feature>
<feature type="helix" evidence="19">
    <location>
        <begin position="167"/>
        <end position="175"/>
    </location>
</feature>
<feature type="strand" evidence="21">
    <location>
        <begin position="185"/>
        <end position="187"/>
    </location>
</feature>
<feature type="helix" evidence="19">
    <location>
        <begin position="190"/>
        <end position="197"/>
    </location>
</feature>
<feature type="helix" evidence="19">
    <location>
        <begin position="200"/>
        <end position="208"/>
    </location>
</feature>
<feature type="strand" evidence="23">
    <location>
        <begin position="217"/>
        <end position="219"/>
    </location>
</feature>
<feature type="helix" evidence="19">
    <location>
        <begin position="222"/>
        <end position="228"/>
    </location>
</feature>
<feature type="helix" evidence="19">
    <location>
        <begin position="232"/>
        <end position="241"/>
    </location>
</feature>
<feature type="helix" evidence="19">
    <location>
        <begin position="246"/>
        <end position="259"/>
    </location>
</feature>
<feature type="turn" evidence="24">
    <location>
        <begin position="260"/>
        <end position="262"/>
    </location>
</feature>
<feature type="turn" evidence="19">
    <location>
        <begin position="264"/>
        <end position="266"/>
    </location>
</feature>
<feature type="helix" evidence="19">
    <location>
        <begin position="269"/>
        <end position="283"/>
    </location>
</feature>
<feature type="strand" evidence="19">
    <location>
        <begin position="285"/>
        <end position="289"/>
    </location>
</feature>
<feature type="helix" evidence="19">
    <location>
        <begin position="298"/>
        <end position="300"/>
    </location>
</feature>
<feature type="turn" evidence="22">
    <location>
        <begin position="301"/>
        <end position="304"/>
    </location>
</feature>
<feature type="helix" evidence="19">
    <location>
        <begin position="311"/>
        <end position="315"/>
    </location>
</feature>
<feature type="turn" evidence="19">
    <location>
        <begin position="316"/>
        <end position="319"/>
    </location>
</feature>
<feature type="helix" evidence="19">
    <location>
        <begin position="321"/>
        <end position="336"/>
    </location>
</feature>
<feature type="turn" evidence="20">
    <location>
        <begin position="337"/>
        <end position="339"/>
    </location>
</feature>
<feature type="helix" evidence="22">
    <location>
        <begin position="341"/>
        <end position="343"/>
    </location>
</feature>
<feature type="helix" evidence="21">
    <location>
        <begin position="345"/>
        <end position="356"/>
    </location>
</feature>
<feature type="helix" evidence="21">
    <location>
        <begin position="361"/>
        <end position="376"/>
    </location>
</feature>
<feature type="helix" evidence="21">
    <location>
        <begin position="382"/>
        <end position="397"/>
    </location>
</feature>
<feature type="helix" evidence="21">
    <location>
        <begin position="404"/>
        <end position="427"/>
    </location>
</feature>
<feature type="strand" evidence="21">
    <location>
        <begin position="429"/>
        <end position="432"/>
    </location>
</feature>
<feature type="helix" evidence="21">
    <location>
        <begin position="433"/>
        <end position="455"/>
    </location>
</feature>
<feature type="helix" evidence="21">
    <location>
        <begin position="461"/>
        <end position="475"/>
    </location>
</feature>
<feature type="helix" evidence="21">
    <location>
        <begin position="487"/>
        <end position="492"/>
    </location>
</feature>
<feature type="helix" evidence="21">
    <location>
        <begin position="502"/>
        <end position="505"/>
    </location>
</feature>
<feature type="helix" evidence="21">
    <location>
        <begin position="512"/>
        <end position="520"/>
    </location>
</feature>
<feature type="helix" evidence="21">
    <location>
        <begin position="535"/>
        <end position="540"/>
    </location>
</feature>
<feature type="turn" evidence="21">
    <location>
        <begin position="545"/>
        <end position="548"/>
    </location>
</feature>
<feature type="helix" evidence="21">
    <location>
        <begin position="549"/>
        <end position="562"/>
    </location>
</feature>
<feature type="helix" evidence="21">
    <location>
        <begin position="578"/>
        <end position="580"/>
    </location>
</feature>
<feature type="helix" evidence="21">
    <location>
        <begin position="583"/>
        <end position="592"/>
    </location>
</feature>
<feature type="helix" evidence="21">
    <location>
        <begin position="597"/>
        <end position="608"/>
    </location>
</feature>
<feature type="strand" evidence="22">
    <location>
        <begin position="613"/>
        <end position="616"/>
    </location>
</feature>
<feature type="helix" evidence="21">
    <location>
        <begin position="618"/>
        <end position="626"/>
    </location>
</feature>
<comment type="function">
    <text evidence="1 2 5 6 7 8 9 10">Substrate-recognition component of a Cul2-RING (CRL2) E3 ubiquitin-protein ligase complex of the DesCEND (destruction via C-end degrons) pathway, which recognizes a C-degron located at the extreme C terminus of target proteins, leading to their ubiquitination and degradation (PubMed:29779948, PubMed:33398168, PubMed:33398170). The C-degron recognized by the DesCEND pathway is usually a motif of less than ten residues and can be present in full-length proteins, truncated proteins or proteolytically cleaved forms (PubMed:29779948, PubMed:33398168, PubMed:33398170). The CRL2(FEM1B) complex specifically recognizes proteins ending with -Gly-Leu-Asp-Arg, such as CDK5R1, leading to their ubiquitination and degradation (PubMed:33398168, PubMed:33398170). Also acts as a regulator of the reductive stress response by mediating ubiquitination of reduced FNIP1: in response to reductive stress, the CRL2(FEM1B) complex specifically recognizes a conserved Cys degron in FNIP1 when this degron is reduced, leading to FNIP1 degradation and subsequent activation of mitochondria to recalibrate reactive oxygen species (ROS) (By similarity). Mechanistically, recognizes and binds reduced FNIP1 through two interface zinc ions, which act as a molecular glue that recruit reduced FNIP1 to FEM1B (By similarity). Promotes ubiquitination of GLI1, suppressing GLI1 transcriptional activator activity (PubMed:24076122). Promotes ubiquitination and degradation of ANKRD37 (By similarity). Promotes ubiquitination and degradation of SLBP (PubMed:28118078). Involved in apoptosis by acting as a death receptor-associated protein that mediates apoptosis (PubMed:10542291). Also involved in glucose homeostasis in pancreatic islet (By similarity). May also act as an adapter/mediator in replication stress-induced signaling that leads to the activation of CHEK1 (PubMed:19330022).</text>
</comment>
<comment type="activity regulation">
    <text evidence="1">Activity of the CRL2(FEM1B) complex toward FNIP1 is inhibited by BEX family proteins (BEX1, BEX2, BEX3, BEX4 and/or BEX5) in absence of reductive stress. Mechanistically, BEX proteins act as pseudosubstrate inhibitors that associate with FEM1B via zinc in absence of reductive stress, thereby preventing association between FEM1B and FNIP1.</text>
</comment>
<comment type="pathway">
    <text evidence="6 7 8 9 10">Protein modification; protein ubiquitination.</text>
</comment>
<comment type="subunit">
    <text evidence="1 2 3 4 5 8">Component of a CRL2 E3 ubiquitin-protein ligase complex, also named ECS (Elongin BC-CUL2/5-SOCS-box protein) complex, composed of CUL2, Elongin BC (ELOB and ELOC), RBX1 and substrate-specific adapter FEM1B (PubMed:15601820, PubMed:29779948). Homooligomer (PubMed:10542291). Interacts with PPM1F and PHTF1 (PubMed:11559703). Interacts with the death domain of FAS/TNFRSF6 and TNFRSF1A (PubMed:10542291). Interacts with CHEK1 (PubMed:19330022). Interacts with NKX3-1 (By similarity).</text>
</comment>
<comment type="interaction">
    <interactant intactId="EBI-310482">
        <id>Q9UK73</id>
    </interactant>
    <interactant intactId="EBI-745632">
        <id>Q9NWT6</id>
        <label>HIF1AN</label>
    </interactant>
    <organismsDiffer>false</organismsDiffer>
    <experiments>3</experiments>
</comment>
<comment type="interaction">
    <interactant intactId="EBI-310482">
        <id>Q9UK73</id>
    </interactant>
    <interactant intactId="EBI-719945">
        <id>P49593</id>
        <label>PPM1F</label>
    </interactant>
    <organismsDiffer>false</organismsDiffer>
    <experiments>2</experiments>
</comment>
<comment type="subcellular location">
    <subcellularLocation>
        <location evidence="5 6">Cytoplasm</location>
    </subcellularLocation>
    <subcellularLocation>
        <location evidence="5">Nucleus</location>
    </subcellularLocation>
    <text evidence="5">In the nucleus, the protein level increased slightly after camptothecin (CPT) treatment (PubMed:19330022). Associated with chromatin (PubMed:19330022).</text>
</comment>
<comment type="tissue specificity">
    <text evidence="2">Widely expressed (PubMed:10542291). Highly expressed in testis (PubMed:10542291). Weakly expressed in other tissues (PubMed:10542291).</text>
</comment>
<comment type="similarity">
    <text evidence="14">Belongs to the fem-1 family.</text>
</comment>
<name>FEM1B_HUMAN</name>
<accession>Q9UK73</accession>
<accession>O43146</accession>
<dbReference type="EMBL" id="AF178632">
    <property type="protein sequence ID" value="AAF05314.1"/>
    <property type="molecule type" value="mRNA"/>
</dbReference>
<dbReference type="EMBL" id="AF204883">
    <property type="protein sequence ID" value="AAF69303.1"/>
    <property type="molecule type" value="mRNA"/>
</dbReference>
<dbReference type="EMBL" id="AB007856">
    <property type="protein sequence ID" value="BAA23692.2"/>
    <property type="molecule type" value="mRNA"/>
</dbReference>
<dbReference type="EMBL" id="AK290167">
    <property type="protein sequence ID" value="BAF82856.1"/>
    <property type="molecule type" value="mRNA"/>
</dbReference>
<dbReference type="EMBL" id="AC021553">
    <property type="status" value="NOT_ANNOTATED_CDS"/>
    <property type="molecule type" value="Genomic_DNA"/>
</dbReference>
<dbReference type="EMBL" id="AC107871">
    <property type="status" value="NOT_ANNOTATED_CDS"/>
    <property type="molecule type" value="Genomic_DNA"/>
</dbReference>
<dbReference type="EMBL" id="CH471082">
    <property type="protein sequence ID" value="EAW77818.1"/>
    <property type="molecule type" value="Genomic_DNA"/>
</dbReference>
<dbReference type="EMBL" id="BC010122">
    <property type="protein sequence ID" value="AAH10122.1"/>
    <property type="molecule type" value="mRNA"/>
</dbReference>
<dbReference type="EMBL" id="BC014558">
    <property type="protein sequence ID" value="AAH14558.1"/>
    <property type="molecule type" value="mRNA"/>
</dbReference>
<dbReference type="CCDS" id="CCDS10228.1"/>
<dbReference type="RefSeq" id="NP_056137.1">
    <property type="nucleotide sequence ID" value="NM_015322.5"/>
</dbReference>
<dbReference type="PDB" id="6LBF">
    <property type="method" value="X-ray"/>
    <property type="resolution" value="3.25 A"/>
    <property type="chains" value="A/B=1-356"/>
</dbReference>
<dbReference type="PDB" id="7CNG">
    <property type="method" value="X-ray"/>
    <property type="resolution" value="3.49 A"/>
    <property type="chains" value="A/B=1-337"/>
</dbReference>
<dbReference type="PDB" id="7EL6">
    <property type="method" value="X-ray"/>
    <property type="resolution" value="2.80 A"/>
    <property type="chains" value="A/B=1-337"/>
</dbReference>
<dbReference type="PDB" id="8IJ1">
    <property type="method" value="EM"/>
    <property type="resolution" value="4.20 A"/>
    <property type="chains" value="D/I=1-627"/>
</dbReference>
<dbReference type="PDB" id="8JE1">
    <property type="method" value="EM"/>
    <property type="resolution" value="3.95 A"/>
    <property type="chains" value="D/I=1-627"/>
</dbReference>
<dbReference type="PDB" id="8JE2">
    <property type="method" value="EM"/>
    <property type="resolution" value="3.63 A"/>
    <property type="chains" value="D=1-627"/>
</dbReference>
<dbReference type="PDB" id="8WQA">
    <property type="method" value="EM"/>
    <property type="resolution" value="3.39 A"/>
    <property type="chains" value="B/D=1-627"/>
</dbReference>
<dbReference type="PDB" id="8WQB">
    <property type="method" value="EM"/>
    <property type="resolution" value="3.37 A"/>
    <property type="chains" value="F/J=1-627"/>
</dbReference>
<dbReference type="PDB" id="8WQC">
    <property type="method" value="EM"/>
    <property type="resolution" value="3.54 A"/>
    <property type="chains" value="A/G=1-627"/>
</dbReference>
<dbReference type="PDB" id="8WQD">
    <property type="method" value="EM"/>
    <property type="resolution" value="3.55 A"/>
    <property type="chains" value="D=1-627"/>
</dbReference>
<dbReference type="PDB" id="8WQE">
    <property type="method" value="EM"/>
    <property type="resolution" value="3.38 A"/>
    <property type="chains" value="B/D=1-627"/>
</dbReference>
<dbReference type="PDB" id="8WQF">
    <property type="method" value="EM"/>
    <property type="resolution" value="3.27 A"/>
    <property type="chains" value="F/J=1-627"/>
</dbReference>
<dbReference type="PDB" id="8WQG">
    <property type="method" value="EM"/>
    <property type="resolution" value="4.09 A"/>
    <property type="chains" value="A/G=1-627"/>
</dbReference>
<dbReference type="PDB" id="8WQH">
    <property type="method" value="EM"/>
    <property type="resolution" value="3.44 A"/>
    <property type="chains" value="D/H=1-627"/>
</dbReference>
<dbReference type="PDB" id="8WQI">
    <property type="method" value="EM"/>
    <property type="resolution" value="3.50 A"/>
    <property type="chains" value="D=1-627"/>
</dbReference>
<dbReference type="PDBsum" id="6LBF"/>
<dbReference type="PDBsum" id="7CNG"/>
<dbReference type="PDBsum" id="7EL6"/>
<dbReference type="PDBsum" id="8IJ1"/>
<dbReference type="PDBsum" id="8JE1"/>
<dbReference type="PDBsum" id="8JE2"/>
<dbReference type="PDBsum" id="8WQA"/>
<dbReference type="PDBsum" id="8WQB"/>
<dbReference type="PDBsum" id="8WQC"/>
<dbReference type="PDBsum" id="8WQD"/>
<dbReference type="PDBsum" id="8WQE"/>
<dbReference type="PDBsum" id="8WQF"/>
<dbReference type="PDBsum" id="8WQG"/>
<dbReference type="PDBsum" id="8WQH"/>
<dbReference type="PDBsum" id="8WQI"/>
<dbReference type="EMDB" id="EMD-35461"/>
<dbReference type="EMDB" id="EMD-36182"/>
<dbReference type="EMDB" id="EMD-36183"/>
<dbReference type="EMDB" id="EMD-37736"/>
<dbReference type="EMDB" id="EMD-37737"/>
<dbReference type="EMDB" id="EMD-37739"/>
<dbReference type="EMDB" id="EMD-37740"/>
<dbReference type="EMDB" id="EMD-37742"/>
<dbReference type="EMDB" id="EMD-37743"/>
<dbReference type="EMDB" id="EMD-37744"/>
<dbReference type="EMDB" id="EMD-37745"/>
<dbReference type="EMDB" id="EMD-37746"/>
<dbReference type="SMR" id="Q9UK73"/>
<dbReference type="BioGRID" id="115421">
    <property type="interactions" value="96"/>
</dbReference>
<dbReference type="ComplexPortal" id="CPX-2218">
    <property type="entry name" value="FEB1B-Elongin C-Elongin B E3 ubiquitin ligase complex"/>
</dbReference>
<dbReference type="DIP" id="DIP-31663N"/>
<dbReference type="FunCoup" id="Q9UK73">
    <property type="interactions" value="3563"/>
</dbReference>
<dbReference type="IntAct" id="Q9UK73">
    <property type="interactions" value="76"/>
</dbReference>
<dbReference type="MINT" id="Q9UK73"/>
<dbReference type="STRING" id="9606.ENSP00000307298"/>
<dbReference type="BindingDB" id="Q9UK73"/>
<dbReference type="ChEMBL" id="CHEMBL5291587"/>
<dbReference type="GlyGen" id="Q9UK73">
    <property type="glycosylation" value="1 site, 1 O-linked glycan (1 site)"/>
</dbReference>
<dbReference type="iPTMnet" id="Q9UK73"/>
<dbReference type="PhosphoSitePlus" id="Q9UK73"/>
<dbReference type="BioMuta" id="FEM1B"/>
<dbReference type="DMDM" id="74753369"/>
<dbReference type="jPOST" id="Q9UK73"/>
<dbReference type="MassIVE" id="Q9UK73"/>
<dbReference type="PaxDb" id="9606-ENSP00000307298"/>
<dbReference type="PeptideAtlas" id="Q9UK73"/>
<dbReference type="ProteomicsDB" id="84733"/>
<dbReference type="Pumba" id="Q9UK73"/>
<dbReference type="Antibodypedia" id="13914">
    <property type="antibodies" value="225 antibodies from 32 providers"/>
</dbReference>
<dbReference type="DNASU" id="10116"/>
<dbReference type="Ensembl" id="ENST00000306917.5">
    <property type="protein sequence ID" value="ENSP00000307298.4"/>
    <property type="gene ID" value="ENSG00000169018.6"/>
</dbReference>
<dbReference type="GeneID" id="10116"/>
<dbReference type="KEGG" id="hsa:10116"/>
<dbReference type="MANE-Select" id="ENST00000306917.5">
    <property type="protein sequence ID" value="ENSP00000307298.4"/>
    <property type="RefSeq nucleotide sequence ID" value="NM_015322.5"/>
    <property type="RefSeq protein sequence ID" value="NP_056137.1"/>
</dbReference>
<dbReference type="UCSC" id="uc002arg.4">
    <property type="organism name" value="human"/>
</dbReference>
<dbReference type="AGR" id="HGNC:3649"/>
<dbReference type="CTD" id="10116"/>
<dbReference type="DisGeNET" id="10116"/>
<dbReference type="GeneCards" id="FEM1B"/>
<dbReference type="HGNC" id="HGNC:3649">
    <property type="gene designation" value="FEM1B"/>
</dbReference>
<dbReference type="HPA" id="ENSG00000169018">
    <property type="expression patterns" value="Low tissue specificity"/>
</dbReference>
<dbReference type="MIM" id="613539">
    <property type="type" value="gene"/>
</dbReference>
<dbReference type="neXtProt" id="NX_Q9UK73"/>
<dbReference type="OpenTargets" id="ENSG00000169018"/>
<dbReference type="PharmGKB" id="PA28089"/>
<dbReference type="VEuPathDB" id="HostDB:ENSG00000169018"/>
<dbReference type="eggNOG" id="KOG0508">
    <property type="taxonomic scope" value="Eukaryota"/>
</dbReference>
<dbReference type="GeneTree" id="ENSGT00940000161115"/>
<dbReference type="HOGENOM" id="CLU_020042_1_0_1"/>
<dbReference type="InParanoid" id="Q9UK73"/>
<dbReference type="OMA" id="ISTKTTC"/>
<dbReference type="OrthoDB" id="4429489at2759"/>
<dbReference type="PAN-GO" id="Q9UK73">
    <property type="GO annotations" value="1 GO annotation based on evolutionary models"/>
</dbReference>
<dbReference type="PhylomeDB" id="Q9UK73"/>
<dbReference type="TreeFam" id="TF351376"/>
<dbReference type="PathwayCommons" id="Q9UK73"/>
<dbReference type="Reactome" id="R-HSA-8951664">
    <property type="pathway name" value="Neddylation"/>
</dbReference>
<dbReference type="SignaLink" id="Q9UK73"/>
<dbReference type="UniPathway" id="UPA00143"/>
<dbReference type="BioGRID-ORCS" id="10116">
    <property type="hits" value="22 hits in 1200 CRISPR screens"/>
</dbReference>
<dbReference type="ChiTaRS" id="FEM1B">
    <property type="organism name" value="human"/>
</dbReference>
<dbReference type="GenomeRNAi" id="10116"/>
<dbReference type="Pharos" id="Q9UK73">
    <property type="development level" value="Tbio"/>
</dbReference>
<dbReference type="PRO" id="PR:Q9UK73"/>
<dbReference type="Proteomes" id="UP000005640">
    <property type="component" value="Chromosome 15"/>
</dbReference>
<dbReference type="RNAct" id="Q9UK73">
    <property type="molecule type" value="protein"/>
</dbReference>
<dbReference type="Bgee" id="ENSG00000169018">
    <property type="expression patterns" value="Expressed in endothelial cell and 212 other cell types or tissues"/>
</dbReference>
<dbReference type="ExpressionAtlas" id="Q9UK73">
    <property type="expression patterns" value="baseline and differential"/>
</dbReference>
<dbReference type="GO" id="GO:0031462">
    <property type="term" value="C:Cul2-RING ubiquitin ligase complex"/>
    <property type="evidence" value="ECO:0000314"/>
    <property type="project" value="UniProtKB"/>
</dbReference>
<dbReference type="GO" id="GO:0005737">
    <property type="term" value="C:cytoplasm"/>
    <property type="evidence" value="ECO:0000314"/>
    <property type="project" value="UniProtKB"/>
</dbReference>
<dbReference type="GO" id="GO:0005829">
    <property type="term" value="C:cytosol"/>
    <property type="evidence" value="ECO:0000314"/>
    <property type="project" value="HPA"/>
</dbReference>
<dbReference type="GO" id="GO:0005739">
    <property type="term" value="C:mitochondrion"/>
    <property type="evidence" value="ECO:0006056"/>
    <property type="project" value="FlyBase"/>
</dbReference>
<dbReference type="GO" id="GO:0005654">
    <property type="term" value="C:nucleoplasm"/>
    <property type="evidence" value="ECO:0000314"/>
    <property type="project" value="HPA"/>
</dbReference>
<dbReference type="GO" id="GO:0005634">
    <property type="term" value="C:nucleus"/>
    <property type="evidence" value="ECO:0000314"/>
    <property type="project" value="UniProtKB"/>
</dbReference>
<dbReference type="GO" id="GO:0000151">
    <property type="term" value="C:ubiquitin ligase complex"/>
    <property type="evidence" value="ECO:0000318"/>
    <property type="project" value="GO_Central"/>
</dbReference>
<dbReference type="GO" id="GO:0005123">
    <property type="term" value="F:death receptor binding"/>
    <property type="evidence" value="ECO:0000315"/>
    <property type="project" value="UniProtKB"/>
</dbReference>
<dbReference type="GO" id="GO:0046872">
    <property type="term" value="F:metal ion binding"/>
    <property type="evidence" value="ECO:0007669"/>
    <property type="project" value="UniProtKB-KW"/>
</dbReference>
<dbReference type="GO" id="GO:1990756">
    <property type="term" value="F:ubiquitin-like ligase-substrate adaptor activity"/>
    <property type="evidence" value="ECO:0000314"/>
    <property type="project" value="UniProtKB"/>
</dbReference>
<dbReference type="GO" id="GO:0006915">
    <property type="term" value="P:apoptotic process"/>
    <property type="evidence" value="ECO:0000303"/>
    <property type="project" value="UniProtKB"/>
</dbReference>
<dbReference type="GO" id="GO:0060442">
    <property type="term" value="P:branching involved in prostate gland morphogenesis"/>
    <property type="evidence" value="ECO:0007669"/>
    <property type="project" value="Ensembl"/>
</dbReference>
<dbReference type="GO" id="GO:0060743">
    <property type="term" value="P:epithelial cell maturation involved in prostate gland development"/>
    <property type="evidence" value="ECO:0007669"/>
    <property type="project" value="Ensembl"/>
</dbReference>
<dbReference type="GO" id="GO:0043161">
    <property type="term" value="P:proteasome-mediated ubiquitin-dependent protein catabolic process"/>
    <property type="evidence" value="ECO:0000314"/>
    <property type="project" value="UniProtKB"/>
</dbReference>
<dbReference type="GO" id="GO:0016567">
    <property type="term" value="P:protein ubiquitination"/>
    <property type="evidence" value="ECO:0007669"/>
    <property type="project" value="UniProtKB-UniPathway"/>
</dbReference>
<dbReference type="GO" id="GO:2000001">
    <property type="term" value="P:regulation of DNA damage checkpoint"/>
    <property type="evidence" value="ECO:0000315"/>
    <property type="project" value="UniProtKB"/>
</dbReference>
<dbReference type="GO" id="GO:1902041">
    <property type="term" value="P:regulation of extrinsic apoptotic signaling pathway via death domain receptors"/>
    <property type="evidence" value="ECO:0000315"/>
    <property type="project" value="UniProtKB"/>
</dbReference>
<dbReference type="GO" id="GO:0051438">
    <property type="term" value="P:regulation of ubiquitin-protein transferase activity"/>
    <property type="evidence" value="ECO:0000315"/>
    <property type="project" value="UniProtKB"/>
</dbReference>
<dbReference type="GO" id="GO:0140627">
    <property type="term" value="P:ubiquitin-dependent protein catabolic process via the C-end degron rule pathway"/>
    <property type="evidence" value="ECO:0000314"/>
    <property type="project" value="UniProtKB"/>
</dbReference>
<dbReference type="FunFam" id="1.25.40.20:FF:000205">
    <property type="entry name" value="Fem-1 homolog B"/>
    <property type="match status" value="1"/>
</dbReference>
<dbReference type="FunFam" id="1.25.40.20:FF:000117">
    <property type="entry name" value="Protein fem-1 homolog B"/>
    <property type="match status" value="1"/>
</dbReference>
<dbReference type="Gene3D" id="1.25.40.20">
    <property type="entry name" value="Ankyrin repeat-containing domain"/>
    <property type="match status" value="3"/>
</dbReference>
<dbReference type="InterPro" id="IPR002110">
    <property type="entry name" value="Ankyrin_rpt"/>
</dbReference>
<dbReference type="InterPro" id="IPR036770">
    <property type="entry name" value="Ankyrin_rpt-contain_sf"/>
</dbReference>
<dbReference type="PANTHER" id="PTHR24173">
    <property type="entry name" value="ANKYRIN REPEAT CONTAINING"/>
    <property type="match status" value="1"/>
</dbReference>
<dbReference type="PANTHER" id="PTHR24173:SF78">
    <property type="entry name" value="PROTEIN FEM-1 HOMOLOG B"/>
    <property type="match status" value="1"/>
</dbReference>
<dbReference type="Pfam" id="PF00023">
    <property type="entry name" value="Ank"/>
    <property type="match status" value="1"/>
</dbReference>
<dbReference type="Pfam" id="PF12796">
    <property type="entry name" value="Ank_2"/>
    <property type="match status" value="2"/>
</dbReference>
<dbReference type="PRINTS" id="PR01415">
    <property type="entry name" value="ANKYRIN"/>
</dbReference>
<dbReference type="SMART" id="SM00248">
    <property type="entry name" value="ANK"/>
    <property type="match status" value="8"/>
</dbReference>
<dbReference type="SUPFAM" id="SSF48403">
    <property type="entry name" value="Ankyrin repeat"/>
    <property type="match status" value="2"/>
</dbReference>
<dbReference type="PROSITE" id="PS50297">
    <property type="entry name" value="ANK_REP_REGION"/>
    <property type="match status" value="2"/>
</dbReference>
<dbReference type="PROSITE" id="PS50088">
    <property type="entry name" value="ANK_REPEAT"/>
    <property type="match status" value="6"/>
</dbReference>
<keyword id="KW-0002">3D-structure</keyword>
<keyword id="KW-0040">ANK repeat</keyword>
<keyword id="KW-0053">Apoptosis</keyword>
<keyword id="KW-0963">Cytoplasm</keyword>
<keyword id="KW-0479">Metal-binding</keyword>
<keyword id="KW-0539">Nucleus</keyword>
<keyword id="KW-1267">Proteomics identification</keyword>
<keyword id="KW-1185">Reference proteome</keyword>
<keyword id="KW-0677">Repeat</keyword>
<keyword id="KW-0802">TPR repeat</keyword>
<keyword id="KW-0833">Ubl conjugation pathway</keyword>
<keyword id="KW-0862">Zinc</keyword>
<evidence type="ECO:0000250" key="1">
    <source>
        <dbReference type="UniProtKB" id="Q9Z2G0"/>
    </source>
</evidence>
<evidence type="ECO:0000269" key="2">
    <source>
    </source>
</evidence>
<evidence type="ECO:0000269" key="3">
    <source>
    </source>
</evidence>
<evidence type="ECO:0000269" key="4">
    <source>
    </source>
</evidence>
<evidence type="ECO:0000269" key="5">
    <source>
    </source>
</evidence>
<evidence type="ECO:0000269" key="6">
    <source>
    </source>
</evidence>
<evidence type="ECO:0000269" key="7">
    <source>
    </source>
</evidence>
<evidence type="ECO:0000269" key="8">
    <source>
    </source>
</evidence>
<evidence type="ECO:0000269" key="9">
    <source>
    </source>
</evidence>
<evidence type="ECO:0000269" key="10">
    <source>
    </source>
</evidence>
<evidence type="ECO:0000303" key="11">
    <source>
    </source>
</evidence>
<evidence type="ECO:0000303" key="12">
    <source>
    </source>
</evidence>
<evidence type="ECO:0000303" key="13">
    <source>
    </source>
</evidence>
<evidence type="ECO:0000305" key="14"/>
<evidence type="ECO:0000312" key="15">
    <source>
        <dbReference type="HGNC" id="HGNC:3649"/>
    </source>
</evidence>
<evidence type="ECO:0007744" key="16">
    <source>
        <dbReference type="PDB" id="6LBF"/>
    </source>
</evidence>
<evidence type="ECO:0007744" key="17">
    <source>
        <dbReference type="PDB" id="7CNG"/>
    </source>
</evidence>
<evidence type="ECO:0007829" key="18">
    <source>
        <dbReference type="PDB" id="6LBF"/>
    </source>
</evidence>
<evidence type="ECO:0007829" key="19">
    <source>
        <dbReference type="PDB" id="7EL6"/>
    </source>
</evidence>
<evidence type="ECO:0007829" key="20">
    <source>
        <dbReference type="PDB" id="8WQA"/>
    </source>
</evidence>
<evidence type="ECO:0007829" key="21">
    <source>
        <dbReference type="PDB" id="8WQB"/>
    </source>
</evidence>
<evidence type="ECO:0007829" key="22">
    <source>
        <dbReference type="PDB" id="8WQE"/>
    </source>
</evidence>
<evidence type="ECO:0007829" key="23">
    <source>
        <dbReference type="PDB" id="8WQH"/>
    </source>
</evidence>
<evidence type="ECO:0007829" key="24">
    <source>
        <dbReference type="PDB" id="8WQI"/>
    </source>
</evidence>
<sequence>MEGLAGYVYKAASEGKVLTLAALLLNRSESDIRYLLGYVSQQGGQRSTPLIIAARNGHAKVVRLLLEHYRVQTQQTGTVRFDGYVIDGATALWCAAGAGHFEVVKLLVSHGANVNHTTVTNSTPLRAACFDGRLDIVKYLVENNANISIANKYDNTCLMIAAYKGHTDVVRYLLEQRADPNAKAHCGATALHFAAEAGHIDIVKELIKWRAAIVVNGHGMTPLKVAAESCKADVVELLLSHADCDRRSRIEALELLGASFANDRENYDIIKTYHYLYLAMLERFQDGDNILEKEVLPPIHAYGNRTECRNPQELESIRQDRDALHMEGLIVRERILGADNIDVSHPIIYRGAVYADNMEFEQCIKLWLHALHLRQKGNRNTHKDLLRFAQVFSQMIHLNETVKAPDIECVLRCSVLEIEQSMNRVKNISDADVHNAMDNYECNLYTFLYLVCISTKTQCSEEDQCKINKQIYNLIHLDPRTREGFTLLHLAVNSNTPVDDFHTNDVCSFPNALVTKLLLDCGAEVNAVDNEGNSALHIIVQYNRPISDFLTLHSIIISLVEAGAHTDMTNKQNKTPLDKSTTGVSEILLKTQMKMSLKCLAARAVRANDINYQDQIPRTLEEFVGFH</sequence>
<organism>
    <name type="scientific">Homo sapiens</name>
    <name type="common">Human</name>
    <dbReference type="NCBI Taxonomy" id="9606"/>
    <lineage>
        <taxon>Eukaryota</taxon>
        <taxon>Metazoa</taxon>
        <taxon>Chordata</taxon>
        <taxon>Craniata</taxon>
        <taxon>Vertebrata</taxon>
        <taxon>Euteleostomi</taxon>
        <taxon>Mammalia</taxon>
        <taxon>Eutheria</taxon>
        <taxon>Euarchontoglires</taxon>
        <taxon>Primates</taxon>
        <taxon>Haplorrhini</taxon>
        <taxon>Catarrhini</taxon>
        <taxon>Hominidae</taxon>
        <taxon>Homo</taxon>
    </lineage>
</organism>